<proteinExistence type="inferred from homology"/>
<evidence type="ECO:0000255" key="1">
    <source>
        <dbReference type="HAMAP-Rule" id="MF_01588"/>
    </source>
</evidence>
<gene>
    <name evidence="1" type="primary">ligA</name>
    <name type="ordered locus">SeSA_A2662</name>
</gene>
<protein>
    <recommendedName>
        <fullName evidence="1">DNA ligase</fullName>
        <ecNumber evidence="1">6.5.1.2</ecNumber>
    </recommendedName>
    <alternativeName>
        <fullName evidence="1">Polydeoxyribonucleotide synthase [NAD(+)]</fullName>
    </alternativeName>
</protein>
<feature type="chain" id="PRO_0000380468" description="DNA ligase">
    <location>
        <begin position="1"/>
        <end position="671"/>
    </location>
</feature>
<feature type="domain" description="BRCT" evidence="1">
    <location>
        <begin position="593"/>
        <end position="671"/>
    </location>
</feature>
<feature type="active site" description="N6-AMP-lysine intermediate" evidence="1">
    <location>
        <position position="115"/>
    </location>
</feature>
<feature type="binding site" evidence="1">
    <location>
        <begin position="32"/>
        <end position="36"/>
    </location>
    <ligand>
        <name>NAD(+)</name>
        <dbReference type="ChEBI" id="CHEBI:57540"/>
    </ligand>
</feature>
<feature type="binding site" evidence="1">
    <location>
        <begin position="81"/>
        <end position="82"/>
    </location>
    <ligand>
        <name>NAD(+)</name>
        <dbReference type="ChEBI" id="CHEBI:57540"/>
    </ligand>
</feature>
<feature type="binding site" evidence="1">
    <location>
        <position position="113"/>
    </location>
    <ligand>
        <name>NAD(+)</name>
        <dbReference type="ChEBI" id="CHEBI:57540"/>
    </ligand>
</feature>
<feature type="binding site" evidence="1">
    <location>
        <position position="136"/>
    </location>
    <ligand>
        <name>NAD(+)</name>
        <dbReference type="ChEBI" id="CHEBI:57540"/>
    </ligand>
</feature>
<feature type="binding site" evidence="1">
    <location>
        <position position="173"/>
    </location>
    <ligand>
        <name>NAD(+)</name>
        <dbReference type="ChEBI" id="CHEBI:57540"/>
    </ligand>
</feature>
<feature type="binding site" evidence="1">
    <location>
        <position position="290"/>
    </location>
    <ligand>
        <name>NAD(+)</name>
        <dbReference type="ChEBI" id="CHEBI:57540"/>
    </ligand>
</feature>
<feature type="binding site" evidence="1">
    <location>
        <position position="314"/>
    </location>
    <ligand>
        <name>NAD(+)</name>
        <dbReference type="ChEBI" id="CHEBI:57540"/>
    </ligand>
</feature>
<feature type="binding site" evidence="1">
    <location>
        <position position="408"/>
    </location>
    <ligand>
        <name>Zn(2+)</name>
        <dbReference type="ChEBI" id="CHEBI:29105"/>
    </ligand>
</feature>
<feature type="binding site" evidence="1">
    <location>
        <position position="411"/>
    </location>
    <ligand>
        <name>Zn(2+)</name>
        <dbReference type="ChEBI" id="CHEBI:29105"/>
    </ligand>
</feature>
<feature type="binding site" evidence="1">
    <location>
        <position position="426"/>
    </location>
    <ligand>
        <name>Zn(2+)</name>
        <dbReference type="ChEBI" id="CHEBI:29105"/>
    </ligand>
</feature>
<feature type="binding site" evidence="1">
    <location>
        <position position="432"/>
    </location>
    <ligand>
        <name>Zn(2+)</name>
        <dbReference type="ChEBI" id="CHEBI:29105"/>
    </ligand>
</feature>
<dbReference type="EC" id="6.5.1.2" evidence="1"/>
<dbReference type="EMBL" id="CP001127">
    <property type="protein sequence ID" value="ACF88905.1"/>
    <property type="molecule type" value="Genomic_DNA"/>
</dbReference>
<dbReference type="RefSeq" id="WP_000433269.1">
    <property type="nucleotide sequence ID" value="NC_011094.1"/>
</dbReference>
<dbReference type="SMR" id="B4TQF8"/>
<dbReference type="KEGG" id="sew:SeSA_A2662"/>
<dbReference type="HOGENOM" id="CLU_007764_2_1_6"/>
<dbReference type="Proteomes" id="UP000001865">
    <property type="component" value="Chromosome"/>
</dbReference>
<dbReference type="GO" id="GO:0005829">
    <property type="term" value="C:cytosol"/>
    <property type="evidence" value="ECO:0007669"/>
    <property type="project" value="TreeGrafter"/>
</dbReference>
<dbReference type="GO" id="GO:0003677">
    <property type="term" value="F:DNA binding"/>
    <property type="evidence" value="ECO:0007669"/>
    <property type="project" value="InterPro"/>
</dbReference>
<dbReference type="GO" id="GO:0003911">
    <property type="term" value="F:DNA ligase (NAD+) activity"/>
    <property type="evidence" value="ECO:0007669"/>
    <property type="project" value="UniProtKB-UniRule"/>
</dbReference>
<dbReference type="GO" id="GO:0046872">
    <property type="term" value="F:metal ion binding"/>
    <property type="evidence" value="ECO:0007669"/>
    <property type="project" value="UniProtKB-KW"/>
</dbReference>
<dbReference type="GO" id="GO:0006281">
    <property type="term" value="P:DNA repair"/>
    <property type="evidence" value="ECO:0007669"/>
    <property type="project" value="UniProtKB-KW"/>
</dbReference>
<dbReference type="GO" id="GO:0006260">
    <property type="term" value="P:DNA replication"/>
    <property type="evidence" value="ECO:0007669"/>
    <property type="project" value="UniProtKB-KW"/>
</dbReference>
<dbReference type="CDD" id="cd17748">
    <property type="entry name" value="BRCT_DNA_ligase_like"/>
    <property type="match status" value="1"/>
</dbReference>
<dbReference type="CDD" id="cd00114">
    <property type="entry name" value="LIGANc"/>
    <property type="match status" value="1"/>
</dbReference>
<dbReference type="FunFam" id="1.10.150.20:FF:000006">
    <property type="entry name" value="DNA ligase"/>
    <property type="match status" value="1"/>
</dbReference>
<dbReference type="FunFam" id="1.10.150.20:FF:000007">
    <property type="entry name" value="DNA ligase"/>
    <property type="match status" value="1"/>
</dbReference>
<dbReference type="FunFam" id="1.10.287.610:FF:000002">
    <property type="entry name" value="DNA ligase"/>
    <property type="match status" value="1"/>
</dbReference>
<dbReference type="FunFam" id="2.40.50.140:FF:000012">
    <property type="entry name" value="DNA ligase"/>
    <property type="match status" value="1"/>
</dbReference>
<dbReference type="FunFam" id="3.30.470.30:FF:000001">
    <property type="entry name" value="DNA ligase"/>
    <property type="match status" value="1"/>
</dbReference>
<dbReference type="FunFam" id="3.40.50.10190:FF:000004">
    <property type="entry name" value="DNA ligase"/>
    <property type="match status" value="1"/>
</dbReference>
<dbReference type="FunFam" id="6.20.10.30:FF:000001">
    <property type="entry name" value="DNA ligase"/>
    <property type="match status" value="1"/>
</dbReference>
<dbReference type="Gene3D" id="6.20.10.30">
    <property type="match status" value="1"/>
</dbReference>
<dbReference type="Gene3D" id="1.10.150.20">
    <property type="entry name" value="5' to 3' exonuclease, C-terminal subdomain"/>
    <property type="match status" value="2"/>
</dbReference>
<dbReference type="Gene3D" id="3.40.50.10190">
    <property type="entry name" value="BRCT domain"/>
    <property type="match status" value="1"/>
</dbReference>
<dbReference type="Gene3D" id="3.30.470.30">
    <property type="entry name" value="DNA ligase/mRNA capping enzyme"/>
    <property type="match status" value="1"/>
</dbReference>
<dbReference type="Gene3D" id="1.10.287.610">
    <property type="entry name" value="Helix hairpin bin"/>
    <property type="match status" value="1"/>
</dbReference>
<dbReference type="Gene3D" id="2.40.50.140">
    <property type="entry name" value="Nucleic acid-binding proteins"/>
    <property type="match status" value="1"/>
</dbReference>
<dbReference type="HAMAP" id="MF_01588">
    <property type="entry name" value="DNA_ligase_A"/>
    <property type="match status" value="1"/>
</dbReference>
<dbReference type="InterPro" id="IPR001357">
    <property type="entry name" value="BRCT_dom"/>
</dbReference>
<dbReference type="InterPro" id="IPR036420">
    <property type="entry name" value="BRCT_dom_sf"/>
</dbReference>
<dbReference type="InterPro" id="IPR041663">
    <property type="entry name" value="DisA/LigA_HHH"/>
</dbReference>
<dbReference type="InterPro" id="IPR001679">
    <property type="entry name" value="DNA_ligase"/>
</dbReference>
<dbReference type="InterPro" id="IPR018239">
    <property type="entry name" value="DNA_ligase_AS"/>
</dbReference>
<dbReference type="InterPro" id="IPR033136">
    <property type="entry name" value="DNA_ligase_CS"/>
</dbReference>
<dbReference type="InterPro" id="IPR013839">
    <property type="entry name" value="DNAligase_adenylation"/>
</dbReference>
<dbReference type="InterPro" id="IPR013840">
    <property type="entry name" value="DNAligase_N"/>
</dbReference>
<dbReference type="InterPro" id="IPR003583">
    <property type="entry name" value="Hlx-hairpin-Hlx_DNA-bd_motif"/>
</dbReference>
<dbReference type="InterPro" id="IPR012340">
    <property type="entry name" value="NA-bd_OB-fold"/>
</dbReference>
<dbReference type="InterPro" id="IPR004150">
    <property type="entry name" value="NAD_DNA_ligase_OB"/>
</dbReference>
<dbReference type="InterPro" id="IPR010994">
    <property type="entry name" value="RuvA_2-like"/>
</dbReference>
<dbReference type="InterPro" id="IPR004149">
    <property type="entry name" value="Znf_DNAligase_C4"/>
</dbReference>
<dbReference type="NCBIfam" id="TIGR00575">
    <property type="entry name" value="dnlj"/>
    <property type="match status" value="1"/>
</dbReference>
<dbReference type="NCBIfam" id="NF005932">
    <property type="entry name" value="PRK07956.1"/>
    <property type="match status" value="1"/>
</dbReference>
<dbReference type="PANTHER" id="PTHR23389">
    <property type="entry name" value="CHROMOSOME TRANSMISSION FIDELITY FACTOR 18"/>
    <property type="match status" value="1"/>
</dbReference>
<dbReference type="PANTHER" id="PTHR23389:SF9">
    <property type="entry name" value="DNA LIGASE"/>
    <property type="match status" value="1"/>
</dbReference>
<dbReference type="Pfam" id="PF00533">
    <property type="entry name" value="BRCT"/>
    <property type="match status" value="1"/>
</dbReference>
<dbReference type="Pfam" id="PF01653">
    <property type="entry name" value="DNA_ligase_aden"/>
    <property type="match status" value="1"/>
</dbReference>
<dbReference type="Pfam" id="PF03120">
    <property type="entry name" value="DNA_ligase_OB"/>
    <property type="match status" value="1"/>
</dbReference>
<dbReference type="Pfam" id="PF03119">
    <property type="entry name" value="DNA_ligase_ZBD"/>
    <property type="match status" value="1"/>
</dbReference>
<dbReference type="Pfam" id="PF12826">
    <property type="entry name" value="HHH_2"/>
    <property type="match status" value="1"/>
</dbReference>
<dbReference type="Pfam" id="PF14520">
    <property type="entry name" value="HHH_5"/>
    <property type="match status" value="1"/>
</dbReference>
<dbReference type="Pfam" id="PF22745">
    <property type="entry name" value="Nlig-Ia"/>
    <property type="match status" value="1"/>
</dbReference>
<dbReference type="PIRSF" id="PIRSF001604">
    <property type="entry name" value="LigA"/>
    <property type="match status" value="1"/>
</dbReference>
<dbReference type="SMART" id="SM00292">
    <property type="entry name" value="BRCT"/>
    <property type="match status" value="1"/>
</dbReference>
<dbReference type="SMART" id="SM00278">
    <property type="entry name" value="HhH1"/>
    <property type="match status" value="4"/>
</dbReference>
<dbReference type="SMART" id="SM00532">
    <property type="entry name" value="LIGANc"/>
    <property type="match status" value="1"/>
</dbReference>
<dbReference type="SUPFAM" id="SSF52113">
    <property type="entry name" value="BRCT domain"/>
    <property type="match status" value="1"/>
</dbReference>
<dbReference type="SUPFAM" id="SSF56091">
    <property type="entry name" value="DNA ligase/mRNA capping enzyme, catalytic domain"/>
    <property type="match status" value="1"/>
</dbReference>
<dbReference type="SUPFAM" id="SSF50249">
    <property type="entry name" value="Nucleic acid-binding proteins"/>
    <property type="match status" value="1"/>
</dbReference>
<dbReference type="SUPFAM" id="SSF47781">
    <property type="entry name" value="RuvA domain 2-like"/>
    <property type="match status" value="1"/>
</dbReference>
<dbReference type="PROSITE" id="PS50172">
    <property type="entry name" value="BRCT"/>
    <property type="match status" value="1"/>
</dbReference>
<dbReference type="PROSITE" id="PS01055">
    <property type="entry name" value="DNA_LIGASE_N1"/>
    <property type="match status" value="1"/>
</dbReference>
<dbReference type="PROSITE" id="PS01056">
    <property type="entry name" value="DNA_LIGASE_N2"/>
    <property type="match status" value="1"/>
</dbReference>
<accession>B4TQF8</accession>
<comment type="function">
    <text evidence="1">DNA ligase that catalyzes the formation of phosphodiester linkages between 5'-phosphoryl and 3'-hydroxyl groups in double-stranded DNA using NAD as a coenzyme and as the energy source for the reaction. It is essential for DNA replication and repair of damaged DNA.</text>
</comment>
<comment type="catalytic activity">
    <reaction evidence="1">
        <text>NAD(+) + (deoxyribonucleotide)n-3'-hydroxyl + 5'-phospho-(deoxyribonucleotide)m = (deoxyribonucleotide)n+m + AMP + beta-nicotinamide D-nucleotide.</text>
        <dbReference type="EC" id="6.5.1.2"/>
    </reaction>
</comment>
<comment type="cofactor">
    <cofactor evidence="1">
        <name>Mg(2+)</name>
        <dbReference type="ChEBI" id="CHEBI:18420"/>
    </cofactor>
    <cofactor evidence="1">
        <name>Mn(2+)</name>
        <dbReference type="ChEBI" id="CHEBI:29035"/>
    </cofactor>
</comment>
<comment type="similarity">
    <text evidence="1">Belongs to the NAD-dependent DNA ligase family. LigA subfamily.</text>
</comment>
<keyword id="KW-0227">DNA damage</keyword>
<keyword id="KW-0234">DNA repair</keyword>
<keyword id="KW-0235">DNA replication</keyword>
<keyword id="KW-0436">Ligase</keyword>
<keyword id="KW-0460">Magnesium</keyword>
<keyword id="KW-0464">Manganese</keyword>
<keyword id="KW-0479">Metal-binding</keyword>
<keyword id="KW-0520">NAD</keyword>
<keyword id="KW-0862">Zinc</keyword>
<name>DNLJ_SALSV</name>
<reference key="1">
    <citation type="journal article" date="2011" name="J. Bacteriol.">
        <title>Comparative genomics of 28 Salmonella enterica isolates: evidence for CRISPR-mediated adaptive sublineage evolution.</title>
        <authorList>
            <person name="Fricke W.F."/>
            <person name="Mammel M.K."/>
            <person name="McDermott P.F."/>
            <person name="Tartera C."/>
            <person name="White D.G."/>
            <person name="Leclerc J.E."/>
            <person name="Ravel J."/>
            <person name="Cebula T.A."/>
        </authorList>
    </citation>
    <scope>NUCLEOTIDE SEQUENCE [LARGE SCALE GENOMIC DNA]</scope>
    <source>
        <strain>CVM19633</strain>
    </source>
</reference>
<organism>
    <name type="scientific">Salmonella schwarzengrund (strain CVM19633)</name>
    <dbReference type="NCBI Taxonomy" id="439843"/>
    <lineage>
        <taxon>Bacteria</taxon>
        <taxon>Pseudomonadati</taxon>
        <taxon>Pseudomonadota</taxon>
        <taxon>Gammaproteobacteria</taxon>
        <taxon>Enterobacterales</taxon>
        <taxon>Enterobacteriaceae</taxon>
        <taxon>Salmonella</taxon>
    </lineage>
</organism>
<sequence length="671" mass="73509">MEPIEQQLTELRTTLRHHEYLYHVMDAPEIPDAEYDRLMRELRELEAQRPDLITPDSPTQRVGAAPLTAFNQIRHEVPMLSLDNVFDEESFLAFNKRVQDRLKSTENVIWCCELKLDGLAVSILYENGVLVSAATRGDGTTGEDITSNVRTIRAIPLKLHGDNIPARLEVRGEVFLPQAGFEKINEDARRTGGKVFANPRNAAAGSLRQLDPRITAKRPLTFFCYGVGILEGGELPDTHLGRLLQFKAWGLPVSDRVTLCDSPQAVLDFYHNVEKDRPTLGFDIDGVVIKVNSLALQEQLGFVARAPRWAVAFKFPAQEQMTFVRDVEFQVGRTGAITPVARLEPVQVAGVLVSNATLHNADEIERLGLRIGDKVVIRRAGDVIPQVVNVVLSERPEETRPIVFPTHCPVCGSDVERVEGEAVTRCTGGLICGAQRKESLKHFVSRRAMDVDGMGDKIIDQLVEREYVHTPADLFRLTAGKLTGLDRMGPKSAQNVVNALEKAKATTFARFLYALGIREVGEATAAGLAAYFGTLEALQAATIDELQKVPDVGIVVATHVFNFFAEESNRDVIGQLLAEGVHWPAPVVINVQEIDSPFAGKTVVLTGSLSQMSRDDAKARLVALGAKVAGSVSKKTDLVIAGEAAGSKLTKAQELGITVIDEAEMIRLLDA</sequence>